<dbReference type="EC" id="6.1.1.3" evidence="1"/>
<dbReference type="EMBL" id="CP000776">
    <property type="protein sequence ID" value="ABS51475.1"/>
    <property type="molecule type" value="Genomic_DNA"/>
</dbReference>
<dbReference type="RefSeq" id="WP_012108485.1">
    <property type="nucleotide sequence ID" value="NC_009714.1"/>
</dbReference>
<dbReference type="SMR" id="A7I107"/>
<dbReference type="STRING" id="360107.CHAB381_0611"/>
<dbReference type="KEGG" id="cha:CHAB381_0611"/>
<dbReference type="eggNOG" id="COG0441">
    <property type="taxonomic scope" value="Bacteria"/>
</dbReference>
<dbReference type="HOGENOM" id="CLU_008554_0_1_7"/>
<dbReference type="OrthoDB" id="9802304at2"/>
<dbReference type="Proteomes" id="UP000002407">
    <property type="component" value="Chromosome"/>
</dbReference>
<dbReference type="GO" id="GO:0005829">
    <property type="term" value="C:cytosol"/>
    <property type="evidence" value="ECO:0007669"/>
    <property type="project" value="TreeGrafter"/>
</dbReference>
<dbReference type="GO" id="GO:0005524">
    <property type="term" value="F:ATP binding"/>
    <property type="evidence" value="ECO:0007669"/>
    <property type="project" value="UniProtKB-UniRule"/>
</dbReference>
<dbReference type="GO" id="GO:0046872">
    <property type="term" value="F:metal ion binding"/>
    <property type="evidence" value="ECO:0007669"/>
    <property type="project" value="UniProtKB-KW"/>
</dbReference>
<dbReference type="GO" id="GO:0004829">
    <property type="term" value="F:threonine-tRNA ligase activity"/>
    <property type="evidence" value="ECO:0007669"/>
    <property type="project" value="UniProtKB-UniRule"/>
</dbReference>
<dbReference type="GO" id="GO:0000049">
    <property type="term" value="F:tRNA binding"/>
    <property type="evidence" value="ECO:0007669"/>
    <property type="project" value="UniProtKB-KW"/>
</dbReference>
<dbReference type="GO" id="GO:0006435">
    <property type="term" value="P:threonyl-tRNA aminoacylation"/>
    <property type="evidence" value="ECO:0007669"/>
    <property type="project" value="UniProtKB-UniRule"/>
</dbReference>
<dbReference type="CDD" id="cd00860">
    <property type="entry name" value="ThrRS_anticodon"/>
    <property type="match status" value="1"/>
</dbReference>
<dbReference type="CDD" id="cd00771">
    <property type="entry name" value="ThrRS_core"/>
    <property type="match status" value="1"/>
</dbReference>
<dbReference type="FunFam" id="3.30.930.10:FF:000019">
    <property type="entry name" value="Threonine--tRNA ligase"/>
    <property type="match status" value="1"/>
</dbReference>
<dbReference type="FunFam" id="3.30.980.10:FF:000005">
    <property type="entry name" value="Threonyl-tRNA synthetase, mitochondrial"/>
    <property type="match status" value="1"/>
</dbReference>
<dbReference type="Gene3D" id="3.30.54.20">
    <property type="match status" value="1"/>
</dbReference>
<dbReference type="Gene3D" id="3.40.50.800">
    <property type="entry name" value="Anticodon-binding domain"/>
    <property type="match status" value="1"/>
</dbReference>
<dbReference type="Gene3D" id="3.30.930.10">
    <property type="entry name" value="Bira Bifunctional Protein, Domain 2"/>
    <property type="match status" value="1"/>
</dbReference>
<dbReference type="Gene3D" id="3.30.980.10">
    <property type="entry name" value="Threonyl-trna Synthetase, Chain A, domain 2"/>
    <property type="match status" value="1"/>
</dbReference>
<dbReference type="HAMAP" id="MF_00184">
    <property type="entry name" value="Thr_tRNA_synth"/>
    <property type="match status" value="1"/>
</dbReference>
<dbReference type="InterPro" id="IPR002314">
    <property type="entry name" value="aa-tRNA-synt_IIb"/>
</dbReference>
<dbReference type="InterPro" id="IPR006195">
    <property type="entry name" value="aa-tRNA-synth_II"/>
</dbReference>
<dbReference type="InterPro" id="IPR045864">
    <property type="entry name" value="aa-tRNA-synth_II/BPL/LPL"/>
</dbReference>
<dbReference type="InterPro" id="IPR004154">
    <property type="entry name" value="Anticodon-bd"/>
</dbReference>
<dbReference type="InterPro" id="IPR036621">
    <property type="entry name" value="Anticodon-bd_dom_sf"/>
</dbReference>
<dbReference type="InterPro" id="IPR002320">
    <property type="entry name" value="Thr-tRNA-ligase_IIa"/>
</dbReference>
<dbReference type="InterPro" id="IPR018163">
    <property type="entry name" value="Thr/Ala-tRNA-synth_IIc_edit"/>
</dbReference>
<dbReference type="InterPro" id="IPR047246">
    <property type="entry name" value="ThrRS_anticodon"/>
</dbReference>
<dbReference type="InterPro" id="IPR033728">
    <property type="entry name" value="ThrRS_core"/>
</dbReference>
<dbReference type="InterPro" id="IPR012947">
    <property type="entry name" value="tRNA_SAD"/>
</dbReference>
<dbReference type="NCBIfam" id="TIGR00418">
    <property type="entry name" value="thrS"/>
    <property type="match status" value="1"/>
</dbReference>
<dbReference type="PANTHER" id="PTHR11451:SF44">
    <property type="entry name" value="THREONINE--TRNA LIGASE, CHLOROPLASTIC_MITOCHONDRIAL 2"/>
    <property type="match status" value="1"/>
</dbReference>
<dbReference type="PANTHER" id="PTHR11451">
    <property type="entry name" value="THREONINE-TRNA LIGASE"/>
    <property type="match status" value="1"/>
</dbReference>
<dbReference type="Pfam" id="PF03129">
    <property type="entry name" value="HGTP_anticodon"/>
    <property type="match status" value="1"/>
</dbReference>
<dbReference type="Pfam" id="PF00587">
    <property type="entry name" value="tRNA-synt_2b"/>
    <property type="match status" value="1"/>
</dbReference>
<dbReference type="Pfam" id="PF07973">
    <property type="entry name" value="tRNA_SAD"/>
    <property type="match status" value="1"/>
</dbReference>
<dbReference type="PRINTS" id="PR01047">
    <property type="entry name" value="TRNASYNTHTHR"/>
</dbReference>
<dbReference type="SMART" id="SM00863">
    <property type="entry name" value="tRNA_SAD"/>
    <property type="match status" value="1"/>
</dbReference>
<dbReference type="SUPFAM" id="SSF52954">
    <property type="entry name" value="Class II aaRS ABD-related"/>
    <property type="match status" value="1"/>
</dbReference>
<dbReference type="SUPFAM" id="SSF55681">
    <property type="entry name" value="Class II aaRS and biotin synthetases"/>
    <property type="match status" value="1"/>
</dbReference>
<dbReference type="SUPFAM" id="SSF55186">
    <property type="entry name" value="ThrRS/AlaRS common domain"/>
    <property type="match status" value="1"/>
</dbReference>
<dbReference type="PROSITE" id="PS50862">
    <property type="entry name" value="AA_TRNA_LIGASE_II"/>
    <property type="match status" value="1"/>
</dbReference>
<gene>
    <name evidence="1" type="primary">thrS</name>
    <name type="ordered locus">CHAB381_0611</name>
</gene>
<feature type="chain" id="PRO_1000071673" description="Threonine--tRNA ligase">
    <location>
        <begin position="1"/>
        <end position="609"/>
    </location>
</feature>
<feature type="region of interest" description="Catalytic" evidence="1">
    <location>
        <begin position="215"/>
        <end position="506"/>
    </location>
</feature>
<feature type="binding site" evidence="1">
    <location>
        <position position="307"/>
    </location>
    <ligand>
        <name>Zn(2+)</name>
        <dbReference type="ChEBI" id="CHEBI:29105"/>
    </ligand>
</feature>
<feature type="binding site" evidence="1">
    <location>
        <position position="358"/>
    </location>
    <ligand>
        <name>Zn(2+)</name>
        <dbReference type="ChEBI" id="CHEBI:29105"/>
    </ligand>
</feature>
<feature type="binding site" evidence="1">
    <location>
        <position position="483"/>
    </location>
    <ligand>
        <name>Zn(2+)</name>
        <dbReference type="ChEBI" id="CHEBI:29105"/>
    </ligand>
</feature>
<keyword id="KW-0030">Aminoacyl-tRNA synthetase</keyword>
<keyword id="KW-0067">ATP-binding</keyword>
<keyword id="KW-0963">Cytoplasm</keyword>
<keyword id="KW-0436">Ligase</keyword>
<keyword id="KW-0479">Metal-binding</keyword>
<keyword id="KW-0547">Nucleotide-binding</keyword>
<keyword id="KW-0648">Protein biosynthesis</keyword>
<keyword id="KW-1185">Reference proteome</keyword>
<keyword id="KW-0694">RNA-binding</keyword>
<keyword id="KW-0820">tRNA-binding</keyword>
<keyword id="KW-0862">Zinc</keyword>
<comment type="function">
    <text evidence="1">Catalyzes the attachment of threonine to tRNA(Thr) in a two-step reaction: L-threonine is first activated by ATP to form Thr-AMP and then transferred to the acceptor end of tRNA(Thr). Also edits incorrectly charged L-seryl-tRNA(Thr).</text>
</comment>
<comment type="catalytic activity">
    <reaction evidence="1">
        <text>tRNA(Thr) + L-threonine + ATP = L-threonyl-tRNA(Thr) + AMP + diphosphate + H(+)</text>
        <dbReference type="Rhea" id="RHEA:24624"/>
        <dbReference type="Rhea" id="RHEA-COMP:9670"/>
        <dbReference type="Rhea" id="RHEA-COMP:9704"/>
        <dbReference type="ChEBI" id="CHEBI:15378"/>
        <dbReference type="ChEBI" id="CHEBI:30616"/>
        <dbReference type="ChEBI" id="CHEBI:33019"/>
        <dbReference type="ChEBI" id="CHEBI:57926"/>
        <dbReference type="ChEBI" id="CHEBI:78442"/>
        <dbReference type="ChEBI" id="CHEBI:78534"/>
        <dbReference type="ChEBI" id="CHEBI:456215"/>
        <dbReference type="EC" id="6.1.1.3"/>
    </reaction>
</comment>
<comment type="cofactor">
    <cofactor evidence="1">
        <name>Zn(2+)</name>
        <dbReference type="ChEBI" id="CHEBI:29105"/>
    </cofactor>
    <text evidence="1">Binds 1 zinc ion per subunit.</text>
</comment>
<comment type="subunit">
    <text evidence="1">Homodimer.</text>
</comment>
<comment type="subcellular location">
    <subcellularLocation>
        <location evidence="1">Cytoplasm</location>
    </subcellularLocation>
</comment>
<comment type="similarity">
    <text evidence="1">Belongs to the class-II aminoacyl-tRNA synthetase family.</text>
</comment>
<protein>
    <recommendedName>
        <fullName evidence="1">Threonine--tRNA ligase</fullName>
        <ecNumber evidence="1">6.1.1.3</ecNumber>
    </recommendedName>
    <alternativeName>
        <fullName evidence="1">Threonyl-tRNA synthetase</fullName>
        <shortName evidence="1">ThrRS</shortName>
    </alternativeName>
</protein>
<evidence type="ECO:0000255" key="1">
    <source>
        <dbReference type="HAMAP-Rule" id="MF_00184"/>
    </source>
</evidence>
<name>SYT_CAMHC</name>
<organism>
    <name type="scientific">Campylobacter hominis (strain ATCC BAA-381 / DSM 21671 / CCUG 45161 / LMG 19568 / NCTC 13146 / CH001A)</name>
    <dbReference type="NCBI Taxonomy" id="360107"/>
    <lineage>
        <taxon>Bacteria</taxon>
        <taxon>Pseudomonadati</taxon>
        <taxon>Campylobacterota</taxon>
        <taxon>Epsilonproteobacteria</taxon>
        <taxon>Campylobacterales</taxon>
        <taxon>Campylobacteraceae</taxon>
        <taxon>Campylobacter</taxon>
    </lineage>
</organism>
<proteinExistence type="inferred from homology"/>
<accession>A7I107</accession>
<sequence length="609" mass="70044">MSDIIAYKVDGEIVDTQSFKSLKNVKNAEEIYFDNSEDALKVIRHSCAHLMAQAILALYPNAKFFVGPAIEDGFYYDFRVTKENGEKLGKEDLQAIEKKMKEFIDAKEEIAKICSTKSEIANEFKNDDLKQEVLKRIPDGEVSVYKQGDFKDICRGPHVPNTKFLRFFKLTRVAGAYLGGDEKREMLTRIYGTAFADKENLNEYLRILEEAKKRDHRIIGNEMKLFTFDDQIGAGLPVWLPNGARMRSKLEKILFGVHRRRGYEPVRGPEILKADAWKISGHYTNYKENMYFTKIDEQEYGIKPMNCVGHIKVYQSEIRSYRDLPLKFFEYGVVHRHEKSGVMHGLFRVREFTQDDAHIFCMPSQIKENVLEILDFVDKIMKNFGFSYEMEISTKPEKAIGDDKVWEIATNALKEALDENGFKYGIDEGGGAFYGPKIDIKITDALKRKWQCGTIQVDFNLPSRFDLGYIDENNERKQPVMLHRAILGSFERFIGILIEHTAGELPFFIAPTGVSIIPINDAHLNYAKEVQKALANLEVDSEILSKNETLNKRIRTAEKGRVPMILVLGDNEVKNRSVALRDRRARAQSNLSLDEFLEFVKNKLNEVNF</sequence>
<reference key="1">
    <citation type="submission" date="2007-07" db="EMBL/GenBank/DDBJ databases">
        <title>Complete genome sequence of Campylobacter hominis ATCC BAA-381, a commensal isolated from the human gastrointestinal tract.</title>
        <authorList>
            <person name="Fouts D.E."/>
            <person name="Mongodin E.F."/>
            <person name="Puiu D."/>
            <person name="Sebastian Y."/>
            <person name="Miller W.G."/>
            <person name="Mandrell R.E."/>
            <person name="Nelson K.E."/>
        </authorList>
    </citation>
    <scope>NUCLEOTIDE SEQUENCE [LARGE SCALE GENOMIC DNA]</scope>
    <source>
        <strain>ATCC BAA-381 / DSM 21671 / CCUG 45161 / LMG 19568 / NCTC 13146 / CH001A</strain>
    </source>
</reference>